<organism>
    <name type="scientific">Pseudomonas fluorescens (strain SBW25)</name>
    <dbReference type="NCBI Taxonomy" id="216595"/>
    <lineage>
        <taxon>Bacteria</taxon>
        <taxon>Pseudomonadati</taxon>
        <taxon>Pseudomonadota</taxon>
        <taxon>Gammaproteobacteria</taxon>
        <taxon>Pseudomonadales</taxon>
        <taxon>Pseudomonadaceae</taxon>
        <taxon>Pseudomonas</taxon>
    </lineage>
</organism>
<name>PYRD_PSEFS</name>
<protein>
    <recommendedName>
        <fullName evidence="1">Dihydroorotate dehydrogenase (quinone)</fullName>
        <ecNumber evidence="1">1.3.5.2</ecNumber>
    </recommendedName>
    <alternativeName>
        <fullName evidence="1">DHOdehase</fullName>
        <shortName evidence="1">DHOD</shortName>
        <shortName evidence="1">DHODase</shortName>
    </alternativeName>
    <alternativeName>
        <fullName evidence="1">Dihydroorotate oxidase</fullName>
    </alternativeName>
</protein>
<sequence>MYTLARQLLFKLSPETSHDLSLDLIGAGGRLGLNGLVCKAPAKVPVSVMGLDFPNPVGLAAGLDKNGAAIDGFAQLGFGFVEIGTVTPRPQPGNPKPRIFRLPEAEAIINRMGFNNLGVDHLLSRVQAAKYQGILGINIGKNFDTPVERAVDDYLICLDKVYAHASYVTVNVSSPNTPGLRSLQFGDSLKQLLEALRQRQEDLAVRHGKRVPLAIKIAPDMSDEETVLVAQALVDSGMDAVIATNTTLSRVGVEGLAHGDEAGGLSGAPVRDKSTHIVKVLAAELAGRLPIIAVGGITEGKHAAEKIAAGASLVQLYSGFIYKGPALIRQSVDAIAALPKA</sequence>
<reference key="1">
    <citation type="journal article" date="2009" name="Genome Biol.">
        <title>Genomic and genetic analyses of diversity and plant interactions of Pseudomonas fluorescens.</title>
        <authorList>
            <person name="Silby M.W."/>
            <person name="Cerdeno-Tarraga A.M."/>
            <person name="Vernikos G.S."/>
            <person name="Giddens S.R."/>
            <person name="Jackson R.W."/>
            <person name="Preston G.M."/>
            <person name="Zhang X.-X."/>
            <person name="Moon C.D."/>
            <person name="Gehrig S.M."/>
            <person name="Godfrey S.A.C."/>
            <person name="Knight C.G."/>
            <person name="Malone J.G."/>
            <person name="Robinson Z."/>
            <person name="Spiers A.J."/>
            <person name="Harris S."/>
            <person name="Challis G.L."/>
            <person name="Yaxley A.M."/>
            <person name="Harris D."/>
            <person name="Seeger K."/>
            <person name="Murphy L."/>
            <person name="Rutter S."/>
            <person name="Squares R."/>
            <person name="Quail M.A."/>
            <person name="Saunders E."/>
            <person name="Mavromatis K."/>
            <person name="Brettin T.S."/>
            <person name="Bentley S.D."/>
            <person name="Hothersall J."/>
            <person name="Stephens E."/>
            <person name="Thomas C.M."/>
            <person name="Parkhill J."/>
            <person name="Levy S.B."/>
            <person name="Rainey P.B."/>
            <person name="Thomson N.R."/>
        </authorList>
    </citation>
    <scope>NUCLEOTIDE SEQUENCE [LARGE SCALE GENOMIC DNA]</scope>
    <source>
        <strain>SBW25</strain>
    </source>
</reference>
<keyword id="KW-1003">Cell membrane</keyword>
<keyword id="KW-0285">Flavoprotein</keyword>
<keyword id="KW-0288">FMN</keyword>
<keyword id="KW-0472">Membrane</keyword>
<keyword id="KW-0560">Oxidoreductase</keyword>
<keyword id="KW-0665">Pyrimidine biosynthesis</keyword>
<accession>C3K017</accession>
<proteinExistence type="inferred from homology"/>
<evidence type="ECO:0000255" key="1">
    <source>
        <dbReference type="HAMAP-Rule" id="MF_00225"/>
    </source>
</evidence>
<feature type="chain" id="PRO_1000204318" description="Dihydroorotate dehydrogenase (quinone)">
    <location>
        <begin position="1"/>
        <end position="341"/>
    </location>
</feature>
<feature type="active site" description="Nucleophile" evidence="1">
    <location>
        <position position="174"/>
    </location>
</feature>
<feature type="binding site" evidence="1">
    <location>
        <begin position="61"/>
        <end position="65"/>
    </location>
    <ligand>
        <name>FMN</name>
        <dbReference type="ChEBI" id="CHEBI:58210"/>
    </ligand>
</feature>
<feature type="binding site" evidence="1">
    <location>
        <position position="65"/>
    </location>
    <ligand>
        <name>substrate</name>
    </ligand>
</feature>
<feature type="binding site" evidence="1">
    <location>
        <position position="85"/>
    </location>
    <ligand>
        <name>FMN</name>
        <dbReference type="ChEBI" id="CHEBI:58210"/>
    </ligand>
</feature>
<feature type="binding site" evidence="1">
    <location>
        <begin position="110"/>
        <end position="114"/>
    </location>
    <ligand>
        <name>substrate</name>
    </ligand>
</feature>
<feature type="binding site" evidence="1">
    <location>
        <position position="138"/>
    </location>
    <ligand>
        <name>FMN</name>
        <dbReference type="ChEBI" id="CHEBI:58210"/>
    </ligand>
</feature>
<feature type="binding site" evidence="1">
    <location>
        <position position="171"/>
    </location>
    <ligand>
        <name>FMN</name>
        <dbReference type="ChEBI" id="CHEBI:58210"/>
    </ligand>
</feature>
<feature type="binding site" evidence="1">
    <location>
        <position position="171"/>
    </location>
    <ligand>
        <name>substrate</name>
    </ligand>
</feature>
<feature type="binding site" evidence="1">
    <location>
        <position position="176"/>
    </location>
    <ligand>
        <name>substrate</name>
    </ligand>
</feature>
<feature type="binding site" evidence="1">
    <location>
        <position position="216"/>
    </location>
    <ligand>
        <name>FMN</name>
        <dbReference type="ChEBI" id="CHEBI:58210"/>
    </ligand>
</feature>
<feature type="binding site" evidence="1">
    <location>
        <position position="244"/>
    </location>
    <ligand>
        <name>FMN</name>
        <dbReference type="ChEBI" id="CHEBI:58210"/>
    </ligand>
</feature>
<feature type="binding site" evidence="1">
    <location>
        <begin position="245"/>
        <end position="246"/>
    </location>
    <ligand>
        <name>substrate</name>
    </ligand>
</feature>
<feature type="binding site" evidence="1">
    <location>
        <position position="267"/>
    </location>
    <ligand>
        <name>FMN</name>
        <dbReference type="ChEBI" id="CHEBI:58210"/>
    </ligand>
</feature>
<feature type="binding site" evidence="1">
    <location>
        <position position="296"/>
    </location>
    <ligand>
        <name>FMN</name>
        <dbReference type="ChEBI" id="CHEBI:58210"/>
    </ligand>
</feature>
<feature type="binding site" evidence="1">
    <location>
        <begin position="317"/>
        <end position="318"/>
    </location>
    <ligand>
        <name>FMN</name>
        <dbReference type="ChEBI" id="CHEBI:58210"/>
    </ligand>
</feature>
<gene>
    <name evidence="1" type="primary">pyrD</name>
    <name type="ordered locus">PFLU_4603</name>
</gene>
<dbReference type="EC" id="1.3.5.2" evidence="1"/>
<dbReference type="EMBL" id="AM181176">
    <property type="protein sequence ID" value="CAY51347.1"/>
    <property type="molecule type" value="Genomic_DNA"/>
</dbReference>
<dbReference type="RefSeq" id="WP_015885338.1">
    <property type="nucleotide sequence ID" value="NC_012660.1"/>
</dbReference>
<dbReference type="SMR" id="C3K017"/>
<dbReference type="STRING" id="294.SRM1_01875"/>
<dbReference type="PATRIC" id="fig|216595.4.peg.4738"/>
<dbReference type="eggNOG" id="COG0167">
    <property type="taxonomic scope" value="Bacteria"/>
</dbReference>
<dbReference type="HOGENOM" id="CLU_013640_2_0_6"/>
<dbReference type="OrthoDB" id="9802377at2"/>
<dbReference type="UniPathway" id="UPA00070">
    <property type="reaction ID" value="UER00946"/>
</dbReference>
<dbReference type="GO" id="GO:0005737">
    <property type="term" value="C:cytoplasm"/>
    <property type="evidence" value="ECO:0007669"/>
    <property type="project" value="InterPro"/>
</dbReference>
<dbReference type="GO" id="GO:0005886">
    <property type="term" value="C:plasma membrane"/>
    <property type="evidence" value="ECO:0007669"/>
    <property type="project" value="UniProtKB-SubCell"/>
</dbReference>
<dbReference type="GO" id="GO:0106430">
    <property type="term" value="F:dihydroorotate dehydrogenase (quinone) activity"/>
    <property type="evidence" value="ECO:0007669"/>
    <property type="project" value="UniProtKB-EC"/>
</dbReference>
<dbReference type="GO" id="GO:0006207">
    <property type="term" value="P:'de novo' pyrimidine nucleobase biosynthetic process"/>
    <property type="evidence" value="ECO:0007669"/>
    <property type="project" value="InterPro"/>
</dbReference>
<dbReference type="GO" id="GO:0044205">
    <property type="term" value="P:'de novo' UMP biosynthetic process"/>
    <property type="evidence" value="ECO:0007669"/>
    <property type="project" value="UniProtKB-UniRule"/>
</dbReference>
<dbReference type="CDD" id="cd04738">
    <property type="entry name" value="DHOD_2_like"/>
    <property type="match status" value="1"/>
</dbReference>
<dbReference type="FunFam" id="3.20.20.70:FF:000028">
    <property type="entry name" value="Dihydroorotate dehydrogenase (quinone)"/>
    <property type="match status" value="1"/>
</dbReference>
<dbReference type="Gene3D" id="3.20.20.70">
    <property type="entry name" value="Aldolase class I"/>
    <property type="match status" value="1"/>
</dbReference>
<dbReference type="HAMAP" id="MF_00225">
    <property type="entry name" value="DHO_dh_type2"/>
    <property type="match status" value="1"/>
</dbReference>
<dbReference type="InterPro" id="IPR013785">
    <property type="entry name" value="Aldolase_TIM"/>
</dbReference>
<dbReference type="InterPro" id="IPR050074">
    <property type="entry name" value="DHO_dehydrogenase"/>
</dbReference>
<dbReference type="InterPro" id="IPR012135">
    <property type="entry name" value="Dihydroorotate_DH_1_2"/>
</dbReference>
<dbReference type="InterPro" id="IPR005719">
    <property type="entry name" value="Dihydroorotate_DH_2"/>
</dbReference>
<dbReference type="InterPro" id="IPR005720">
    <property type="entry name" value="Dihydroorotate_DH_cat"/>
</dbReference>
<dbReference type="InterPro" id="IPR001295">
    <property type="entry name" value="Dihydroorotate_DH_CS"/>
</dbReference>
<dbReference type="NCBIfam" id="NF003644">
    <property type="entry name" value="PRK05286.1-1"/>
    <property type="match status" value="1"/>
</dbReference>
<dbReference type="NCBIfam" id="NF003645">
    <property type="entry name" value="PRK05286.1-2"/>
    <property type="match status" value="1"/>
</dbReference>
<dbReference type="NCBIfam" id="NF003646">
    <property type="entry name" value="PRK05286.1-4"/>
    <property type="match status" value="1"/>
</dbReference>
<dbReference type="NCBIfam" id="NF003652">
    <property type="entry name" value="PRK05286.2-5"/>
    <property type="match status" value="1"/>
</dbReference>
<dbReference type="NCBIfam" id="TIGR01036">
    <property type="entry name" value="pyrD_sub2"/>
    <property type="match status" value="1"/>
</dbReference>
<dbReference type="PANTHER" id="PTHR48109:SF4">
    <property type="entry name" value="DIHYDROOROTATE DEHYDROGENASE (QUINONE), MITOCHONDRIAL"/>
    <property type="match status" value="1"/>
</dbReference>
<dbReference type="PANTHER" id="PTHR48109">
    <property type="entry name" value="DIHYDROOROTATE DEHYDROGENASE (QUINONE), MITOCHONDRIAL-RELATED"/>
    <property type="match status" value="1"/>
</dbReference>
<dbReference type="Pfam" id="PF01180">
    <property type="entry name" value="DHO_dh"/>
    <property type="match status" value="1"/>
</dbReference>
<dbReference type="PIRSF" id="PIRSF000164">
    <property type="entry name" value="DHO_oxidase"/>
    <property type="match status" value="1"/>
</dbReference>
<dbReference type="SUPFAM" id="SSF51395">
    <property type="entry name" value="FMN-linked oxidoreductases"/>
    <property type="match status" value="1"/>
</dbReference>
<dbReference type="PROSITE" id="PS00911">
    <property type="entry name" value="DHODEHASE_1"/>
    <property type="match status" value="1"/>
</dbReference>
<comment type="function">
    <text evidence="1">Catalyzes the conversion of dihydroorotate to orotate with quinone as electron acceptor.</text>
</comment>
<comment type="catalytic activity">
    <reaction evidence="1">
        <text>(S)-dihydroorotate + a quinone = orotate + a quinol</text>
        <dbReference type="Rhea" id="RHEA:30187"/>
        <dbReference type="ChEBI" id="CHEBI:24646"/>
        <dbReference type="ChEBI" id="CHEBI:30839"/>
        <dbReference type="ChEBI" id="CHEBI:30864"/>
        <dbReference type="ChEBI" id="CHEBI:132124"/>
        <dbReference type="EC" id="1.3.5.2"/>
    </reaction>
</comment>
<comment type="cofactor">
    <cofactor evidence="1">
        <name>FMN</name>
        <dbReference type="ChEBI" id="CHEBI:58210"/>
    </cofactor>
    <text evidence="1">Binds 1 FMN per subunit.</text>
</comment>
<comment type="pathway">
    <text evidence="1">Pyrimidine metabolism; UMP biosynthesis via de novo pathway; orotate from (S)-dihydroorotate (quinone route): step 1/1.</text>
</comment>
<comment type="subunit">
    <text evidence="1">Monomer.</text>
</comment>
<comment type="subcellular location">
    <subcellularLocation>
        <location evidence="1">Cell membrane</location>
        <topology evidence="1">Peripheral membrane protein</topology>
    </subcellularLocation>
</comment>
<comment type="similarity">
    <text evidence="1">Belongs to the dihydroorotate dehydrogenase family. Type 2 subfamily.</text>
</comment>